<name>RPIA_BORPD</name>
<organism>
    <name type="scientific">Bordetella petrii (strain ATCC BAA-461 / DSM 12804 / CCUG 43448)</name>
    <dbReference type="NCBI Taxonomy" id="340100"/>
    <lineage>
        <taxon>Bacteria</taxon>
        <taxon>Pseudomonadati</taxon>
        <taxon>Pseudomonadota</taxon>
        <taxon>Betaproteobacteria</taxon>
        <taxon>Burkholderiales</taxon>
        <taxon>Alcaligenaceae</taxon>
        <taxon>Bordetella</taxon>
    </lineage>
</organism>
<accession>A9IJV4</accession>
<sequence>MLTQQELKQQAADAALALIEPLLGPDVIIGVGTGSTADLFIDGLARYRDRLRGTVASSERSAARLAGHGITVLDLNDVTSMPVYVDGADEIDARLHMIKGGGGAQTREKIVASVADRYICIVDESKLVERLGSFPLPVEVIPMARQAVARALVALGGQPRLREGFTTDNGNIILDVAGLQIDDAPALELTVNNLPGVVTCGLFARPGADVALLATQNGIRRLERP</sequence>
<reference key="1">
    <citation type="journal article" date="2008" name="BMC Genomics">
        <title>The missing link: Bordetella petrii is endowed with both the metabolic versatility of environmental bacteria and virulence traits of pathogenic Bordetellae.</title>
        <authorList>
            <person name="Gross R."/>
            <person name="Guzman C.A."/>
            <person name="Sebaihia M."/>
            <person name="Martin dos Santos V.A.P."/>
            <person name="Pieper D.H."/>
            <person name="Koebnik R."/>
            <person name="Lechner M."/>
            <person name="Bartels D."/>
            <person name="Buhrmester J."/>
            <person name="Choudhuri J.V."/>
            <person name="Ebensen T."/>
            <person name="Gaigalat L."/>
            <person name="Herrmann S."/>
            <person name="Khachane A.N."/>
            <person name="Larisch C."/>
            <person name="Link S."/>
            <person name="Linke B."/>
            <person name="Meyer F."/>
            <person name="Mormann S."/>
            <person name="Nakunst D."/>
            <person name="Rueckert C."/>
            <person name="Schneiker-Bekel S."/>
            <person name="Schulze K."/>
            <person name="Voerholter F.-J."/>
            <person name="Yevsa T."/>
            <person name="Engle J.T."/>
            <person name="Goldman W.E."/>
            <person name="Puehler A."/>
            <person name="Goebel U.B."/>
            <person name="Goesmann A."/>
            <person name="Bloecker H."/>
            <person name="Kaiser O."/>
            <person name="Martinez-Arias R."/>
        </authorList>
    </citation>
    <scope>NUCLEOTIDE SEQUENCE [LARGE SCALE GENOMIC DNA]</scope>
    <source>
        <strain>ATCC BAA-461 / DSM 12804 / CCUG 43448</strain>
    </source>
</reference>
<feature type="chain" id="PRO_1000097649" description="Ribose-5-phosphate isomerase A">
    <location>
        <begin position="1"/>
        <end position="225"/>
    </location>
</feature>
<feature type="active site" description="Proton acceptor" evidence="1">
    <location>
        <position position="108"/>
    </location>
</feature>
<feature type="binding site" evidence="1">
    <location>
        <begin position="33"/>
        <end position="36"/>
    </location>
    <ligand>
        <name>substrate</name>
    </ligand>
</feature>
<feature type="binding site" evidence="1">
    <location>
        <begin position="86"/>
        <end position="89"/>
    </location>
    <ligand>
        <name>substrate</name>
    </ligand>
</feature>
<feature type="binding site" evidence="1">
    <location>
        <begin position="99"/>
        <end position="102"/>
    </location>
    <ligand>
        <name>substrate</name>
    </ligand>
</feature>
<feature type="binding site" evidence="1">
    <location>
        <position position="126"/>
    </location>
    <ligand>
        <name>substrate</name>
    </ligand>
</feature>
<dbReference type="EC" id="5.3.1.6" evidence="1"/>
<dbReference type="EMBL" id="AM902716">
    <property type="protein sequence ID" value="CAP42296.1"/>
    <property type="molecule type" value="Genomic_DNA"/>
</dbReference>
<dbReference type="SMR" id="A9IJV4"/>
<dbReference type="STRING" id="94624.Bpet1957"/>
<dbReference type="KEGG" id="bpt:Bpet1957"/>
<dbReference type="eggNOG" id="COG0120">
    <property type="taxonomic scope" value="Bacteria"/>
</dbReference>
<dbReference type="UniPathway" id="UPA00115">
    <property type="reaction ID" value="UER00412"/>
</dbReference>
<dbReference type="Proteomes" id="UP000001225">
    <property type="component" value="Chromosome"/>
</dbReference>
<dbReference type="GO" id="GO:0005829">
    <property type="term" value="C:cytosol"/>
    <property type="evidence" value="ECO:0007669"/>
    <property type="project" value="TreeGrafter"/>
</dbReference>
<dbReference type="GO" id="GO:0004751">
    <property type="term" value="F:ribose-5-phosphate isomerase activity"/>
    <property type="evidence" value="ECO:0007669"/>
    <property type="project" value="UniProtKB-UniRule"/>
</dbReference>
<dbReference type="GO" id="GO:0006014">
    <property type="term" value="P:D-ribose metabolic process"/>
    <property type="evidence" value="ECO:0007669"/>
    <property type="project" value="TreeGrafter"/>
</dbReference>
<dbReference type="GO" id="GO:0009052">
    <property type="term" value="P:pentose-phosphate shunt, non-oxidative branch"/>
    <property type="evidence" value="ECO:0007669"/>
    <property type="project" value="UniProtKB-UniRule"/>
</dbReference>
<dbReference type="CDD" id="cd01398">
    <property type="entry name" value="RPI_A"/>
    <property type="match status" value="1"/>
</dbReference>
<dbReference type="FunFam" id="3.40.50.1360:FF:000001">
    <property type="entry name" value="Ribose-5-phosphate isomerase A"/>
    <property type="match status" value="1"/>
</dbReference>
<dbReference type="Gene3D" id="3.30.70.260">
    <property type="match status" value="1"/>
</dbReference>
<dbReference type="Gene3D" id="3.40.50.1360">
    <property type="match status" value="1"/>
</dbReference>
<dbReference type="HAMAP" id="MF_00170">
    <property type="entry name" value="Rib_5P_isom_A"/>
    <property type="match status" value="1"/>
</dbReference>
<dbReference type="InterPro" id="IPR037171">
    <property type="entry name" value="NagB/RpiA_transferase-like"/>
</dbReference>
<dbReference type="InterPro" id="IPR020672">
    <property type="entry name" value="Ribose5P_isomerase_typA_subgr"/>
</dbReference>
<dbReference type="InterPro" id="IPR004788">
    <property type="entry name" value="Ribose5P_isomerase_type_A"/>
</dbReference>
<dbReference type="NCBIfam" id="NF001924">
    <property type="entry name" value="PRK00702.1"/>
    <property type="match status" value="1"/>
</dbReference>
<dbReference type="NCBIfam" id="TIGR00021">
    <property type="entry name" value="rpiA"/>
    <property type="match status" value="1"/>
</dbReference>
<dbReference type="PANTHER" id="PTHR11934">
    <property type="entry name" value="RIBOSE-5-PHOSPHATE ISOMERASE"/>
    <property type="match status" value="1"/>
</dbReference>
<dbReference type="PANTHER" id="PTHR11934:SF0">
    <property type="entry name" value="RIBOSE-5-PHOSPHATE ISOMERASE"/>
    <property type="match status" value="1"/>
</dbReference>
<dbReference type="Pfam" id="PF06026">
    <property type="entry name" value="Rib_5-P_isom_A"/>
    <property type="match status" value="1"/>
</dbReference>
<dbReference type="SUPFAM" id="SSF75445">
    <property type="entry name" value="D-ribose-5-phosphate isomerase (RpiA), lid domain"/>
    <property type="match status" value="1"/>
</dbReference>
<dbReference type="SUPFAM" id="SSF100950">
    <property type="entry name" value="NagB/RpiA/CoA transferase-like"/>
    <property type="match status" value="1"/>
</dbReference>
<comment type="function">
    <text evidence="1">Catalyzes the reversible conversion of ribose-5-phosphate to ribulose 5-phosphate.</text>
</comment>
<comment type="catalytic activity">
    <reaction evidence="1">
        <text>aldehydo-D-ribose 5-phosphate = D-ribulose 5-phosphate</text>
        <dbReference type="Rhea" id="RHEA:14657"/>
        <dbReference type="ChEBI" id="CHEBI:58121"/>
        <dbReference type="ChEBI" id="CHEBI:58273"/>
        <dbReference type="EC" id="5.3.1.6"/>
    </reaction>
</comment>
<comment type="pathway">
    <text evidence="1">Carbohydrate degradation; pentose phosphate pathway; D-ribose 5-phosphate from D-ribulose 5-phosphate (non-oxidative stage): step 1/1.</text>
</comment>
<comment type="subunit">
    <text evidence="1">Homodimer.</text>
</comment>
<comment type="similarity">
    <text evidence="1">Belongs to the ribose 5-phosphate isomerase family.</text>
</comment>
<protein>
    <recommendedName>
        <fullName evidence="1">Ribose-5-phosphate isomerase A</fullName>
        <ecNumber evidence="1">5.3.1.6</ecNumber>
    </recommendedName>
    <alternativeName>
        <fullName evidence="1">Phosphoriboisomerase A</fullName>
        <shortName evidence="1">PRI</shortName>
    </alternativeName>
</protein>
<keyword id="KW-0413">Isomerase</keyword>
<gene>
    <name evidence="1" type="primary">rpiA</name>
    <name type="ordered locus">Bpet1957</name>
</gene>
<proteinExistence type="inferred from homology"/>
<evidence type="ECO:0000255" key="1">
    <source>
        <dbReference type="HAMAP-Rule" id="MF_00170"/>
    </source>
</evidence>